<evidence type="ECO:0000255" key="1">
    <source>
        <dbReference type="HAMAP-Rule" id="MF_00117"/>
    </source>
</evidence>
<organism>
    <name type="scientific">Aquifex aeolicus (strain VF5)</name>
    <dbReference type="NCBI Taxonomy" id="224324"/>
    <lineage>
        <taxon>Bacteria</taxon>
        <taxon>Pseudomonadati</taxon>
        <taxon>Aquificota</taxon>
        <taxon>Aquificia</taxon>
        <taxon>Aquificales</taxon>
        <taxon>Aquificaceae</taxon>
        <taxon>Aquifex</taxon>
    </lineage>
</organism>
<name>HSLO_AQUAE</name>
<sequence>MLIKELSEQVKKDLKDYFQERDYMVIAVPKKEPVRVYVVKATNTVETARRIHNLSPSATVAMGRAIVGALLLTSLLKHGTNQKLLLKIEGDGPIGTIVVEADAKGRVRGFVGNPNVDTYTKEVEGKKKFDVAKIVGKGTLTVVKDLGMGKPYTSVVPLISGEIGQDIAYYLYQSEQTPSAVAVGVKVNEDGSVKHAGGYLVQTLGGTSEKVKELLEKRILSLPPVTEMMEKGMRPEDIAVEILKDMEPQLIGLKEVEYYCPCDEEVAKASLFLMSTQELEDLFNENELAEVSCNFCGRIYRFDRSVIEEKRELEKKKGENGEKKD</sequence>
<comment type="function">
    <text evidence="1">Redox regulated molecular chaperone. Protects both thermally unfolding and oxidatively damaged proteins from irreversible aggregation. Plays an important role in the bacterial defense system toward oxidative stress.</text>
</comment>
<comment type="subcellular location">
    <subcellularLocation>
        <location evidence="1">Cytoplasm</location>
    </subcellularLocation>
</comment>
<comment type="PTM">
    <text evidence="1">Under oxidizing conditions two disulfide bonds are formed involving the reactive cysteines. Under reducing conditions zinc is bound to the reactive cysteines and the protein is inactive.</text>
</comment>
<comment type="similarity">
    <text evidence="1">Belongs to the HSP33 family.</text>
</comment>
<reference key="1">
    <citation type="journal article" date="1998" name="Nature">
        <title>The complete genome of the hyperthermophilic bacterium Aquifex aeolicus.</title>
        <authorList>
            <person name="Deckert G."/>
            <person name="Warren P.V."/>
            <person name="Gaasterland T."/>
            <person name="Young W.G."/>
            <person name="Lenox A.L."/>
            <person name="Graham D.E."/>
            <person name="Overbeek R."/>
            <person name="Snead M.A."/>
            <person name="Keller M."/>
            <person name="Aujay M."/>
            <person name="Huber R."/>
            <person name="Feldman R.A."/>
            <person name="Short J.M."/>
            <person name="Olsen G.J."/>
            <person name="Swanson R.V."/>
        </authorList>
    </citation>
    <scope>NUCLEOTIDE SEQUENCE [LARGE SCALE GENOMIC DNA]</scope>
    <source>
        <strain>VF5</strain>
    </source>
</reference>
<dbReference type="EMBL" id="AE000657">
    <property type="protein sequence ID" value="AAC07776.1"/>
    <property type="molecule type" value="Genomic_DNA"/>
</dbReference>
<dbReference type="PIR" id="F70472">
    <property type="entry name" value="F70472"/>
</dbReference>
<dbReference type="RefSeq" id="NP_214379.1">
    <property type="nucleotide sequence ID" value="NC_000918.1"/>
</dbReference>
<dbReference type="RefSeq" id="WP_010881315.1">
    <property type="nucleotide sequence ID" value="NC_000918.1"/>
</dbReference>
<dbReference type="SMR" id="O67810"/>
<dbReference type="FunCoup" id="O67810">
    <property type="interactions" value="221"/>
</dbReference>
<dbReference type="STRING" id="224324.aq_2009"/>
<dbReference type="EnsemblBacteria" id="AAC07776">
    <property type="protein sequence ID" value="AAC07776"/>
    <property type="gene ID" value="aq_2009"/>
</dbReference>
<dbReference type="KEGG" id="aae:aq_2009"/>
<dbReference type="eggNOG" id="COG1281">
    <property type="taxonomic scope" value="Bacteria"/>
</dbReference>
<dbReference type="HOGENOM" id="CLU_054493_1_0_0"/>
<dbReference type="InParanoid" id="O67810"/>
<dbReference type="OrthoDB" id="9776534at2"/>
<dbReference type="Proteomes" id="UP000000798">
    <property type="component" value="Chromosome"/>
</dbReference>
<dbReference type="GO" id="GO:0005737">
    <property type="term" value="C:cytoplasm"/>
    <property type="evidence" value="ECO:0000318"/>
    <property type="project" value="GO_Central"/>
</dbReference>
<dbReference type="GO" id="GO:0044183">
    <property type="term" value="F:protein folding chaperone"/>
    <property type="evidence" value="ECO:0000318"/>
    <property type="project" value="GO_Central"/>
</dbReference>
<dbReference type="GO" id="GO:0051082">
    <property type="term" value="F:unfolded protein binding"/>
    <property type="evidence" value="ECO:0007669"/>
    <property type="project" value="UniProtKB-UniRule"/>
</dbReference>
<dbReference type="GO" id="GO:0042026">
    <property type="term" value="P:protein refolding"/>
    <property type="evidence" value="ECO:0000318"/>
    <property type="project" value="GO_Central"/>
</dbReference>
<dbReference type="CDD" id="cd00498">
    <property type="entry name" value="Hsp33"/>
    <property type="match status" value="1"/>
</dbReference>
<dbReference type="Gene3D" id="3.55.30.10">
    <property type="entry name" value="Hsp33 domain"/>
    <property type="match status" value="1"/>
</dbReference>
<dbReference type="Gene3D" id="3.90.1280.10">
    <property type="entry name" value="HSP33 redox switch-like"/>
    <property type="match status" value="1"/>
</dbReference>
<dbReference type="HAMAP" id="MF_00117">
    <property type="entry name" value="HslO"/>
    <property type="match status" value="1"/>
</dbReference>
<dbReference type="InterPro" id="IPR000397">
    <property type="entry name" value="Heat_shock_Hsp33"/>
</dbReference>
<dbReference type="InterPro" id="IPR016154">
    <property type="entry name" value="Heat_shock_Hsp33_C"/>
</dbReference>
<dbReference type="InterPro" id="IPR016153">
    <property type="entry name" value="Heat_shock_Hsp33_N"/>
</dbReference>
<dbReference type="NCBIfam" id="NF001033">
    <property type="entry name" value="PRK00114.1"/>
    <property type="match status" value="1"/>
</dbReference>
<dbReference type="PANTHER" id="PTHR30111">
    <property type="entry name" value="33 KDA CHAPERONIN"/>
    <property type="match status" value="1"/>
</dbReference>
<dbReference type="PANTHER" id="PTHR30111:SF1">
    <property type="entry name" value="33 KDA CHAPERONIN"/>
    <property type="match status" value="1"/>
</dbReference>
<dbReference type="Pfam" id="PF01430">
    <property type="entry name" value="HSP33"/>
    <property type="match status" value="1"/>
</dbReference>
<dbReference type="PIRSF" id="PIRSF005261">
    <property type="entry name" value="Heat_shock_Hsp33"/>
    <property type="match status" value="1"/>
</dbReference>
<dbReference type="SUPFAM" id="SSF64397">
    <property type="entry name" value="Hsp33 domain"/>
    <property type="match status" value="1"/>
</dbReference>
<dbReference type="SUPFAM" id="SSF118352">
    <property type="entry name" value="HSP33 redox switch-like"/>
    <property type="match status" value="1"/>
</dbReference>
<proteinExistence type="inferred from homology"/>
<protein>
    <recommendedName>
        <fullName evidence="1">33 kDa chaperonin</fullName>
    </recommendedName>
    <alternativeName>
        <fullName evidence="1">Heat shock protein 33 homolog</fullName>
        <shortName evidence="1">HSP33</shortName>
    </alternativeName>
</protein>
<keyword id="KW-0143">Chaperone</keyword>
<keyword id="KW-0963">Cytoplasm</keyword>
<keyword id="KW-1015">Disulfide bond</keyword>
<keyword id="KW-0676">Redox-active center</keyword>
<keyword id="KW-1185">Reference proteome</keyword>
<keyword id="KW-0862">Zinc</keyword>
<accession>O67810</accession>
<gene>
    <name evidence="1" type="primary">hslO</name>
    <name type="ordered locus">aq_2009</name>
</gene>
<feature type="chain" id="PRO_0000192162" description="33 kDa chaperonin">
    <location>
        <begin position="1"/>
        <end position="325"/>
    </location>
</feature>
<feature type="disulfide bond" description="Redox-active" evidence="1">
    <location>
        <begin position="260"/>
        <end position="262"/>
    </location>
</feature>
<feature type="disulfide bond" description="Redox-active" evidence="1">
    <location>
        <begin position="293"/>
        <end position="296"/>
    </location>
</feature>